<organism>
    <name type="scientific">Escherichia coli O81 (strain ED1a)</name>
    <dbReference type="NCBI Taxonomy" id="585397"/>
    <lineage>
        <taxon>Bacteria</taxon>
        <taxon>Pseudomonadati</taxon>
        <taxon>Pseudomonadota</taxon>
        <taxon>Gammaproteobacteria</taxon>
        <taxon>Enterobacterales</taxon>
        <taxon>Enterobacteriaceae</taxon>
        <taxon>Escherichia</taxon>
    </lineage>
</organism>
<evidence type="ECO:0000255" key="1">
    <source>
        <dbReference type="HAMAP-Rule" id="MF_01630"/>
    </source>
</evidence>
<sequence length="828" mass="93044">MKLSRRSFMKANAVAAAAAAAGLSVPGVARAVVGQQEAIKWDKAPCRFCGTGCGVLVGTQQGRVVACQGDPDAPVNRGLNCIKGYFLPKIMYGKDRLTQPLLRMKNGKYDKEGEFTPITWDQAFDVMEDKFKTALKEKGPESIGMFGSGQWTIWEGYAASKLFKAGFRSNNIDPNARHCMASAVVGFMRTFGMDEPMGCYDDIEQADAFVLWGSNMAEMHPILWSRITNRRLSNQNVTVAVLSTYQHRSFELADNGIIFTPQSDLVILNYIANYIIQNNAINQDFFSKHVNLRKGATDIGYGLRPTHPLEKAAKNPGSDASEPMSFEDYKAFVAEYTLEKTAEMTGVPKDQLEQLAQLYADPNKKVISYWTMGFNQHTRGVWANNLVYNLHLLTGKISQPGCGPFSLTGQPSACGTAREVGTFAHRLPADMVVTNEKHRDICEKKWNIPSGTIPAKIGLHAVAQDRALKDGKLNVYWTMCTNNMQAGPNINEERMPGWRDPRNFIIVSDPYPTVSALAADLILPTAMWVEKEGAYGNAERRTQFWRQQVQAPGEAKSDLWQLVQFSRRFKTEEVWPEELLAKKPELRGKTLYDVLYATPEVSKFPVSELAEDQLNDESRELGFYLQKGLFEEYAWFGRGHGHDLAPFDDYHKARGLRWPVVNGKETQWRYSEGNDPYVKAGEGYKFYGKPDGKAVIFALPFEPAAEAPDEEYDLWLSTGRVLEHWHTGSMTRRVPELHRAFPEAVLFIHPLDAKARDLRRGDKVKVVSRRGEVISIVETRGRNRPPQGLVYMPFFDAAQLVNKLTLDATDPLSKETDFKKCAVKLEKV</sequence>
<name>NAPA_ECO81</name>
<accession>B7MXN6</accession>
<gene>
    <name evidence="1" type="primary">napA</name>
    <name type="ordered locus">ECED1_2671</name>
</gene>
<protein>
    <recommendedName>
        <fullName evidence="1">Periplasmic nitrate reductase</fullName>
        <ecNumber evidence="1">1.9.6.1</ecNumber>
    </recommendedName>
</protein>
<reference key="1">
    <citation type="journal article" date="2009" name="PLoS Genet.">
        <title>Organised genome dynamics in the Escherichia coli species results in highly diverse adaptive paths.</title>
        <authorList>
            <person name="Touchon M."/>
            <person name="Hoede C."/>
            <person name="Tenaillon O."/>
            <person name="Barbe V."/>
            <person name="Baeriswyl S."/>
            <person name="Bidet P."/>
            <person name="Bingen E."/>
            <person name="Bonacorsi S."/>
            <person name="Bouchier C."/>
            <person name="Bouvet O."/>
            <person name="Calteau A."/>
            <person name="Chiapello H."/>
            <person name="Clermont O."/>
            <person name="Cruveiller S."/>
            <person name="Danchin A."/>
            <person name="Diard M."/>
            <person name="Dossat C."/>
            <person name="Karoui M.E."/>
            <person name="Frapy E."/>
            <person name="Garry L."/>
            <person name="Ghigo J.M."/>
            <person name="Gilles A.M."/>
            <person name="Johnson J."/>
            <person name="Le Bouguenec C."/>
            <person name="Lescat M."/>
            <person name="Mangenot S."/>
            <person name="Martinez-Jehanne V."/>
            <person name="Matic I."/>
            <person name="Nassif X."/>
            <person name="Oztas S."/>
            <person name="Petit M.A."/>
            <person name="Pichon C."/>
            <person name="Rouy Z."/>
            <person name="Ruf C.S."/>
            <person name="Schneider D."/>
            <person name="Tourret J."/>
            <person name="Vacherie B."/>
            <person name="Vallenet D."/>
            <person name="Medigue C."/>
            <person name="Rocha E.P.C."/>
            <person name="Denamur E."/>
        </authorList>
    </citation>
    <scope>NUCLEOTIDE SEQUENCE [LARGE SCALE GENOMIC DNA]</scope>
    <source>
        <strain>ED1a</strain>
    </source>
</reference>
<keyword id="KW-0004">4Fe-4S</keyword>
<keyword id="KW-0249">Electron transport</keyword>
<keyword id="KW-0408">Iron</keyword>
<keyword id="KW-0411">Iron-sulfur</keyword>
<keyword id="KW-0479">Metal-binding</keyword>
<keyword id="KW-0500">Molybdenum</keyword>
<keyword id="KW-0534">Nitrate assimilation</keyword>
<keyword id="KW-0560">Oxidoreductase</keyword>
<keyword id="KW-0574">Periplasm</keyword>
<keyword id="KW-0732">Signal</keyword>
<keyword id="KW-0813">Transport</keyword>
<dbReference type="EC" id="1.9.6.1" evidence="1"/>
<dbReference type="EMBL" id="CU928162">
    <property type="protein sequence ID" value="CAR08852.2"/>
    <property type="molecule type" value="Genomic_DNA"/>
</dbReference>
<dbReference type="RefSeq" id="WP_000778043.1">
    <property type="nucleotide sequence ID" value="NC_011745.1"/>
</dbReference>
<dbReference type="SMR" id="B7MXN6"/>
<dbReference type="KEGG" id="ecq:ECED1_2671"/>
<dbReference type="HOGENOM" id="CLU_000422_13_4_6"/>
<dbReference type="Proteomes" id="UP000000748">
    <property type="component" value="Chromosome"/>
</dbReference>
<dbReference type="GO" id="GO:0016020">
    <property type="term" value="C:membrane"/>
    <property type="evidence" value="ECO:0007669"/>
    <property type="project" value="TreeGrafter"/>
</dbReference>
<dbReference type="GO" id="GO:0009325">
    <property type="term" value="C:nitrate reductase complex"/>
    <property type="evidence" value="ECO:0007669"/>
    <property type="project" value="TreeGrafter"/>
</dbReference>
<dbReference type="GO" id="GO:0042597">
    <property type="term" value="C:periplasmic space"/>
    <property type="evidence" value="ECO:0007669"/>
    <property type="project" value="UniProtKB-SubCell"/>
</dbReference>
<dbReference type="GO" id="GO:0051539">
    <property type="term" value="F:4 iron, 4 sulfur cluster binding"/>
    <property type="evidence" value="ECO:0007669"/>
    <property type="project" value="UniProtKB-KW"/>
</dbReference>
<dbReference type="GO" id="GO:0009055">
    <property type="term" value="F:electron transfer activity"/>
    <property type="evidence" value="ECO:0007669"/>
    <property type="project" value="UniProtKB-UniRule"/>
</dbReference>
<dbReference type="GO" id="GO:0005506">
    <property type="term" value="F:iron ion binding"/>
    <property type="evidence" value="ECO:0007669"/>
    <property type="project" value="UniProtKB-UniRule"/>
</dbReference>
<dbReference type="GO" id="GO:0030151">
    <property type="term" value="F:molybdenum ion binding"/>
    <property type="evidence" value="ECO:0007669"/>
    <property type="project" value="InterPro"/>
</dbReference>
<dbReference type="GO" id="GO:0043546">
    <property type="term" value="F:molybdopterin cofactor binding"/>
    <property type="evidence" value="ECO:0007669"/>
    <property type="project" value="InterPro"/>
</dbReference>
<dbReference type="GO" id="GO:0050140">
    <property type="term" value="F:nitrate reductase (cytochrome) activity"/>
    <property type="evidence" value="ECO:0007669"/>
    <property type="project" value="UniProtKB-EC"/>
</dbReference>
<dbReference type="GO" id="GO:0045333">
    <property type="term" value="P:cellular respiration"/>
    <property type="evidence" value="ECO:0007669"/>
    <property type="project" value="UniProtKB-ARBA"/>
</dbReference>
<dbReference type="GO" id="GO:0006777">
    <property type="term" value="P:Mo-molybdopterin cofactor biosynthetic process"/>
    <property type="evidence" value="ECO:0007669"/>
    <property type="project" value="UniProtKB-UniRule"/>
</dbReference>
<dbReference type="GO" id="GO:0042128">
    <property type="term" value="P:nitrate assimilation"/>
    <property type="evidence" value="ECO:0007669"/>
    <property type="project" value="UniProtKB-UniRule"/>
</dbReference>
<dbReference type="CDD" id="cd02791">
    <property type="entry name" value="MopB_CT_Nitrate-R-NapA-like"/>
    <property type="match status" value="1"/>
</dbReference>
<dbReference type="CDD" id="cd02754">
    <property type="entry name" value="MopB_Nitrate-R-NapA-like"/>
    <property type="match status" value="1"/>
</dbReference>
<dbReference type="FunFam" id="2.40.40.20:FF:000005">
    <property type="entry name" value="Periplasmic nitrate reductase"/>
    <property type="match status" value="1"/>
</dbReference>
<dbReference type="FunFam" id="3.40.228.10:FF:000001">
    <property type="entry name" value="Periplasmic nitrate reductase"/>
    <property type="match status" value="1"/>
</dbReference>
<dbReference type="Gene3D" id="2.40.40.20">
    <property type="match status" value="1"/>
</dbReference>
<dbReference type="Gene3D" id="3.30.200.210">
    <property type="match status" value="1"/>
</dbReference>
<dbReference type="Gene3D" id="3.40.50.740">
    <property type="match status" value="1"/>
</dbReference>
<dbReference type="Gene3D" id="3.40.228.10">
    <property type="entry name" value="Dimethylsulfoxide Reductase, domain 2"/>
    <property type="match status" value="1"/>
</dbReference>
<dbReference type="HAMAP" id="MF_01630">
    <property type="entry name" value="Nitrate_reduct_NapA"/>
    <property type="match status" value="1"/>
</dbReference>
<dbReference type="InterPro" id="IPR009010">
    <property type="entry name" value="Asp_de-COase-like_dom_sf"/>
</dbReference>
<dbReference type="InterPro" id="IPR041957">
    <property type="entry name" value="CT_Nitrate-R-NapA-like"/>
</dbReference>
<dbReference type="InterPro" id="IPR006657">
    <property type="entry name" value="MoPterin_dinucl-bd_dom"/>
</dbReference>
<dbReference type="InterPro" id="IPR006656">
    <property type="entry name" value="Mopterin_OxRdtase"/>
</dbReference>
<dbReference type="InterPro" id="IPR006963">
    <property type="entry name" value="Mopterin_OxRdtase_4Fe-4S_dom"/>
</dbReference>
<dbReference type="InterPro" id="IPR027467">
    <property type="entry name" value="MopterinOxRdtase_cofactor_BS"/>
</dbReference>
<dbReference type="InterPro" id="IPR010051">
    <property type="entry name" value="Periplasm_NO3_reductase_lsu"/>
</dbReference>
<dbReference type="InterPro" id="IPR050123">
    <property type="entry name" value="Prok_molybdopt-oxidoreductase"/>
</dbReference>
<dbReference type="InterPro" id="IPR006311">
    <property type="entry name" value="TAT_signal"/>
</dbReference>
<dbReference type="InterPro" id="IPR019546">
    <property type="entry name" value="TAT_signal_bac_arc"/>
</dbReference>
<dbReference type="NCBIfam" id="TIGR01706">
    <property type="entry name" value="NAPA"/>
    <property type="match status" value="1"/>
</dbReference>
<dbReference type="NCBIfam" id="NF010055">
    <property type="entry name" value="PRK13532.1"/>
    <property type="match status" value="1"/>
</dbReference>
<dbReference type="NCBIfam" id="TIGR01409">
    <property type="entry name" value="TAT_signal_seq"/>
    <property type="match status" value="1"/>
</dbReference>
<dbReference type="PANTHER" id="PTHR43105:SF11">
    <property type="entry name" value="PERIPLASMIC NITRATE REDUCTASE"/>
    <property type="match status" value="1"/>
</dbReference>
<dbReference type="PANTHER" id="PTHR43105">
    <property type="entry name" value="RESPIRATORY NITRATE REDUCTASE"/>
    <property type="match status" value="1"/>
</dbReference>
<dbReference type="Pfam" id="PF04879">
    <property type="entry name" value="Molybdop_Fe4S4"/>
    <property type="match status" value="1"/>
</dbReference>
<dbReference type="Pfam" id="PF00384">
    <property type="entry name" value="Molybdopterin"/>
    <property type="match status" value="1"/>
</dbReference>
<dbReference type="Pfam" id="PF01568">
    <property type="entry name" value="Molydop_binding"/>
    <property type="match status" value="1"/>
</dbReference>
<dbReference type="SMART" id="SM00926">
    <property type="entry name" value="Molybdop_Fe4S4"/>
    <property type="match status" value="1"/>
</dbReference>
<dbReference type="SUPFAM" id="SSF50692">
    <property type="entry name" value="ADC-like"/>
    <property type="match status" value="1"/>
</dbReference>
<dbReference type="SUPFAM" id="SSF53706">
    <property type="entry name" value="Formate dehydrogenase/DMSO reductase, domains 1-3"/>
    <property type="match status" value="1"/>
</dbReference>
<dbReference type="PROSITE" id="PS51669">
    <property type="entry name" value="4FE4S_MOW_BIS_MGD"/>
    <property type="match status" value="1"/>
</dbReference>
<dbReference type="PROSITE" id="PS00551">
    <property type="entry name" value="MOLYBDOPTERIN_PROK_1"/>
    <property type="match status" value="1"/>
</dbReference>
<dbReference type="PROSITE" id="PS51318">
    <property type="entry name" value="TAT"/>
    <property type="match status" value="1"/>
</dbReference>
<feature type="signal peptide" description="Tat-type signal" evidence="1">
    <location>
        <begin position="1"/>
        <end position="31"/>
    </location>
</feature>
<feature type="chain" id="PRO_1000186358" description="Periplasmic nitrate reductase" evidence="1">
    <location>
        <begin position="32"/>
        <end position="828"/>
    </location>
</feature>
<feature type="domain" description="4Fe-4S Mo/W bis-MGD-type" evidence="1">
    <location>
        <begin position="39"/>
        <end position="95"/>
    </location>
</feature>
<feature type="binding site" evidence="1">
    <location>
        <position position="46"/>
    </location>
    <ligand>
        <name>[4Fe-4S] cluster</name>
        <dbReference type="ChEBI" id="CHEBI:49883"/>
    </ligand>
</feature>
<feature type="binding site" evidence="1">
    <location>
        <position position="49"/>
    </location>
    <ligand>
        <name>[4Fe-4S] cluster</name>
        <dbReference type="ChEBI" id="CHEBI:49883"/>
    </ligand>
</feature>
<feature type="binding site" evidence="1">
    <location>
        <position position="53"/>
    </location>
    <ligand>
        <name>[4Fe-4S] cluster</name>
        <dbReference type="ChEBI" id="CHEBI:49883"/>
    </ligand>
</feature>
<feature type="binding site" evidence="1">
    <location>
        <position position="81"/>
    </location>
    <ligand>
        <name>[4Fe-4S] cluster</name>
        <dbReference type="ChEBI" id="CHEBI:49883"/>
    </ligand>
</feature>
<feature type="binding site" evidence="1">
    <location>
        <position position="83"/>
    </location>
    <ligand>
        <name>Mo-bis(molybdopterin guanine dinucleotide)</name>
        <dbReference type="ChEBI" id="CHEBI:60539"/>
    </ligand>
</feature>
<feature type="binding site" evidence="1">
    <location>
        <position position="150"/>
    </location>
    <ligand>
        <name>Mo-bis(molybdopterin guanine dinucleotide)</name>
        <dbReference type="ChEBI" id="CHEBI:60539"/>
    </ligand>
</feature>
<feature type="binding site" evidence="1">
    <location>
        <position position="175"/>
    </location>
    <ligand>
        <name>Mo-bis(molybdopterin guanine dinucleotide)</name>
        <dbReference type="ChEBI" id="CHEBI:60539"/>
    </ligand>
</feature>
<feature type="binding site" evidence="1">
    <location>
        <position position="179"/>
    </location>
    <ligand>
        <name>Mo-bis(molybdopterin guanine dinucleotide)</name>
        <dbReference type="ChEBI" id="CHEBI:60539"/>
    </ligand>
</feature>
<feature type="binding site" evidence="1">
    <location>
        <begin position="212"/>
        <end position="219"/>
    </location>
    <ligand>
        <name>Mo-bis(molybdopterin guanine dinucleotide)</name>
        <dbReference type="ChEBI" id="CHEBI:60539"/>
    </ligand>
</feature>
<feature type="binding site" evidence="1">
    <location>
        <begin position="243"/>
        <end position="247"/>
    </location>
    <ligand>
        <name>Mo-bis(molybdopterin guanine dinucleotide)</name>
        <dbReference type="ChEBI" id="CHEBI:60539"/>
    </ligand>
</feature>
<feature type="binding site" evidence="1">
    <location>
        <begin position="262"/>
        <end position="264"/>
    </location>
    <ligand>
        <name>Mo-bis(molybdopterin guanine dinucleotide)</name>
        <dbReference type="ChEBI" id="CHEBI:60539"/>
    </ligand>
</feature>
<feature type="binding site" evidence="1">
    <location>
        <position position="372"/>
    </location>
    <ligand>
        <name>Mo-bis(molybdopterin guanine dinucleotide)</name>
        <dbReference type="ChEBI" id="CHEBI:60539"/>
    </ligand>
</feature>
<feature type="binding site" evidence="1">
    <location>
        <position position="376"/>
    </location>
    <ligand>
        <name>Mo-bis(molybdopterin guanine dinucleotide)</name>
        <dbReference type="ChEBI" id="CHEBI:60539"/>
    </ligand>
</feature>
<feature type="binding site" evidence="1">
    <location>
        <position position="482"/>
    </location>
    <ligand>
        <name>Mo-bis(molybdopterin guanine dinucleotide)</name>
        <dbReference type="ChEBI" id="CHEBI:60539"/>
    </ligand>
</feature>
<feature type="binding site" evidence="1">
    <location>
        <begin position="508"/>
        <end position="509"/>
    </location>
    <ligand>
        <name>Mo-bis(molybdopterin guanine dinucleotide)</name>
        <dbReference type="ChEBI" id="CHEBI:60539"/>
    </ligand>
</feature>
<feature type="binding site" evidence="1">
    <location>
        <position position="531"/>
    </location>
    <ligand>
        <name>Mo-bis(molybdopterin guanine dinucleotide)</name>
        <dbReference type="ChEBI" id="CHEBI:60539"/>
    </ligand>
</feature>
<feature type="binding site" evidence="1">
    <location>
        <position position="558"/>
    </location>
    <ligand>
        <name>Mo-bis(molybdopterin guanine dinucleotide)</name>
        <dbReference type="ChEBI" id="CHEBI:60539"/>
    </ligand>
</feature>
<feature type="binding site" evidence="1">
    <location>
        <begin position="718"/>
        <end position="727"/>
    </location>
    <ligand>
        <name>Mo-bis(molybdopterin guanine dinucleotide)</name>
        <dbReference type="ChEBI" id="CHEBI:60539"/>
    </ligand>
</feature>
<feature type="binding site" evidence="1">
    <location>
        <position position="794"/>
    </location>
    <ligand>
        <name>substrate</name>
    </ligand>
</feature>
<feature type="binding site" evidence="1">
    <location>
        <position position="802"/>
    </location>
    <ligand>
        <name>Mo-bis(molybdopterin guanine dinucleotide)</name>
        <dbReference type="ChEBI" id="CHEBI:60539"/>
    </ligand>
</feature>
<feature type="binding site" evidence="1">
    <location>
        <position position="819"/>
    </location>
    <ligand>
        <name>Mo-bis(molybdopterin guanine dinucleotide)</name>
        <dbReference type="ChEBI" id="CHEBI:60539"/>
    </ligand>
</feature>
<proteinExistence type="inferred from homology"/>
<comment type="function">
    <text evidence="1">Catalytic subunit of the periplasmic nitrate reductase complex NapAB. Receives electrons from NapB and catalyzes the reduction of nitrate to nitrite.</text>
</comment>
<comment type="catalytic activity">
    <reaction evidence="1">
        <text>2 Fe(II)-[cytochrome] + nitrate + 2 H(+) = 2 Fe(III)-[cytochrome] + nitrite + H2O</text>
        <dbReference type="Rhea" id="RHEA:12909"/>
        <dbReference type="Rhea" id="RHEA-COMP:11777"/>
        <dbReference type="Rhea" id="RHEA-COMP:11778"/>
        <dbReference type="ChEBI" id="CHEBI:15377"/>
        <dbReference type="ChEBI" id="CHEBI:15378"/>
        <dbReference type="ChEBI" id="CHEBI:16301"/>
        <dbReference type="ChEBI" id="CHEBI:17632"/>
        <dbReference type="ChEBI" id="CHEBI:29033"/>
        <dbReference type="ChEBI" id="CHEBI:29034"/>
        <dbReference type="EC" id="1.9.6.1"/>
    </reaction>
</comment>
<comment type="cofactor">
    <cofactor evidence="1">
        <name>[4Fe-4S] cluster</name>
        <dbReference type="ChEBI" id="CHEBI:49883"/>
    </cofactor>
    <text evidence="1">Binds 1 [4Fe-4S] cluster.</text>
</comment>
<comment type="cofactor">
    <cofactor evidence="1">
        <name>Mo-bis(molybdopterin guanine dinucleotide)</name>
        <dbReference type="ChEBI" id="CHEBI:60539"/>
    </cofactor>
    <text evidence="1">Binds 1 molybdenum-bis(molybdopterin guanine dinucleotide) (Mo-bis-MGD) cofactor per subunit.</text>
</comment>
<comment type="subunit">
    <text evidence="1">Component of the periplasmic nitrate reductase NapAB complex composed of NapA and NapB.</text>
</comment>
<comment type="subcellular location">
    <subcellularLocation>
        <location evidence="1">Periplasm</location>
    </subcellularLocation>
</comment>
<comment type="PTM">
    <text evidence="1">Predicted to be exported by the Tat system. The position of the signal peptide cleavage has not been experimentally proven.</text>
</comment>
<comment type="similarity">
    <text evidence="1">Belongs to the prokaryotic molybdopterin-containing oxidoreductase family. NasA/NapA/NarB subfamily.</text>
</comment>